<proteinExistence type="inferred from homology"/>
<dbReference type="EMBL" id="EF115542">
    <property type="protein sequence ID" value="ABK79475.1"/>
    <property type="molecule type" value="Genomic_DNA"/>
</dbReference>
<dbReference type="EMBL" id="EF115542">
    <property type="protein sequence ID" value="ABK79536.1"/>
    <property type="molecule type" value="Genomic_DNA"/>
</dbReference>
<dbReference type="RefSeq" id="YP_899386.1">
    <property type="nucleotide sequence ID" value="NC_008602.1"/>
</dbReference>
<dbReference type="RefSeq" id="YP_899448.1">
    <property type="nucleotide sequence ID" value="NC_008602.1"/>
</dbReference>
<dbReference type="SMR" id="A1E9Q3"/>
<dbReference type="FunCoup" id="A1E9Q3">
    <property type="interactions" value="24"/>
</dbReference>
<dbReference type="STRING" id="4558.A1E9Q3"/>
<dbReference type="GeneID" id="4549092"/>
<dbReference type="GeneID" id="4549135"/>
<dbReference type="KEGG" id="sbi:4549092"/>
<dbReference type="KEGG" id="sbi:4549135"/>
<dbReference type="InParanoid" id="A1E9Q3"/>
<dbReference type="OrthoDB" id="584535at2759"/>
<dbReference type="Proteomes" id="UP000000768">
    <property type="component" value="Chloroplast"/>
</dbReference>
<dbReference type="GO" id="GO:0009507">
    <property type="term" value="C:chloroplast"/>
    <property type="evidence" value="ECO:0007669"/>
    <property type="project" value="UniProtKB-SubCell"/>
</dbReference>
<dbReference type="GO" id="GO:0005763">
    <property type="term" value="C:mitochondrial small ribosomal subunit"/>
    <property type="evidence" value="ECO:0000318"/>
    <property type="project" value="GO_Central"/>
</dbReference>
<dbReference type="GO" id="GO:0019843">
    <property type="term" value="F:rRNA binding"/>
    <property type="evidence" value="ECO:0007669"/>
    <property type="project" value="UniProtKB-UniRule"/>
</dbReference>
<dbReference type="GO" id="GO:0003735">
    <property type="term" value="F:structural constituent of ribosome"/>
    <property type="evidence" value="ECO:0000318"/>
    <property type="project" value="GO_Central"/>
</dbReference>
<dbReference type="GO" id="GO:0000028">
    <property type="term" value="P:ribosomal small subunit assembly"/>
    <property type="evidence" value="ECO:0000318"/>
    <property type="project" value="GO_Central"/>
</dbReference>
<dbReference type="GO" id="GO:0006412">
    <property type="term" value="P:translation"/>
    <property type="evidence" value="ECO:0007669"/>
    <property type="project" value="UniProtKB-UniRule"/>
</dbReference>
<dbReference type="FunFam" id="3.30.860.10:FF:000001">
    <property type="entry name" value="30S ribosomal protein S19"/>
    <property type="match status" value="1"/>
</dbReference>
<dbReference type="Gene3D" id="3.30.860.10">
    <property type="entry name" value="30s Ribosomal Protein S19, Chain A"/>
    <property type="match status" value="1"/>
</dbReference>
<dbReference type="HAMAP" id="MF_00531">
    <property type="entry name" value="Ribosomal_uS19"/>
    <property type="match status" value="1"/>
</dbReference>
<dbReference type="InterPro" id="IPR002222">
    <property type="entry name" value="Ribosomal_uS19"/>
</dbReference>
<dbReference type="InterPro" id="IPR005732">
    <property type="entry name" value="Ribosomal_uS19_bac-type"/>
</dbReference>
<dbReference type="InterPro" id="IPR020934">
    <property type="entry name" value="Ribosomal_uS19_CS"/>
</dbReference>
<dbReference type="InterPro" id="IPR023575">
    <property type="entry name" value="Ribosomal_uS19_SF"/>
</dbReference>
<dbReference type="NCBIfam" id="TIGR01050">
    <property type="entry name" value="rpsS_bact"/>
    <property type="match status" value="1"/>
</dbReference>
<dbReference type="PANTHER" id="PTHR11880">
    <property type="entry name" value="RIBOSOMAL PROTEIN S19P FAMILY MEMBER"/>
    <property type="match status" value="1"/>
</dbReference>
<dbReference type="PANTHER" id="PTHR11880:SF8">
    <property type="entry name" value="SMALL RIBOSOMAL SUBUNIT PROTEIN US19M"/>
    <property type="match status" value="1"/>
</dbReference>
<dbReference type="Pfam" id="PF00203">
    <property type="entry name" value="Ribosomal_S19"/>
    <property type="match status" value="1"/>
</dbReference>
<dbReference type="PIRSF" id="PIRSF002144">
    <property type="entry name" value="Ribosomal_S19"/>
    <property type="match status" value="1"/>
</dbReference>
<dbReference type="PRINTS" id="PR00975">
    <property type="entry name" value="RIBOSOMALS19"/>
</dbReference>
<dbReference type="SUPFAM" id="SSF54570">
    <property type="entry name" value="Ribosomal protein S19"/>
    <property type="match status" value="1"/>
</dbReference>
<dbReference type="PROSITE" id="PS00323">
    <property type="entry name" value="RIBOSOMAL_S19"/>
    <property type="match status" value="1"/>
</dbReference>
<accession>A1E9Q3</accession>
<reference key="1">
    <citation type="journal article" date="2007" name="Theor. Appl. Genet.">
        <title>Complete chloroplast genome sequences of Hordeum vulgare, Sorghum bicolor and Agrostis stolonifera, and comparative analyses with other grass genomes.</title>
        <authorList>
            <person name="Saski C."/>
            <person name="Lee S.-B."/>
            <person name="Fjellheim S."/>
            <person name="Guda C."/>
            <person name="Jansen R.K."/>
            <person name="Luo H."/>
            <person name="Tomkins J."/>
            <person name="Rognli O.A."/>
            <person name="Daniell H."/>
            <person name="Clarke J.L."/>
        </authorList>
    </citation>
    <scope>NUCLEOTIDE SEQUENCE [LARGE SCALE GENOMIC DNA]</scope>
    <source>
        <strain>cv. BTx623</strain>
    </source>
</reference>
<organism>
    <name type="scientific">Sorghum bicolor</name>
    <name type="common">Sorghum</name>
    <name type="synonym">Sorghum vulgare</name>
    <dbReference type="NCBI Taxonomy" id="4558"/>
    <lineage>
        <taxon>Eukaryota</taxon>
        <taxon>Viridiplantae</taxon>
        <taxon>Streptophyta</taxon>
        <taxon>Embryophyta</taxon>
        <taxon>Tracheophyta</taxon>
        <taxon>Spermatophyta</taxon>
        <taxon>Magnoliopsida</taxon>
        <taxon>Liliopsida</taxon>
        <taxon>Poales</taxon>
        <taxon>Poaceae</taxon>
        <taxon>PACMAD clade</taxon>
        <taxon>Panicoideae</taxon>
        <taxon>Andropogonodae</taxon>
        <taxon>Andropogoneae</taxon>
        <taxon>Sorghinae</taxon>
        <taxon>Sorghum</taxon>
    </lineage>
</organism>
<comment type="function">
    <text evidence="1">Protein S19 forms a complex with S13 that binds strongly to the 16S ribosomal RNA.</text>
</comment>
<comment type="subcellular location">
    <subcellularLocation>
        <location>Plastid</location>
        <location>Chloroplast</location>
    </subcellularLocation>
</comment>
<comment type="similarity">
    <text evidence="1">Belongs to the universal ribosomal protein uS19 family.</text>
</comment>
<geneLocation type="chloroplast"/>
<name>RR19_SORBI</name>
<gene>
    <name evidence="1" type="primary">rps19</name>
</gene>
<feature type="chain" id="PRO_0000276926" description="Small ribosomal subunit protein uS19c">
    <location>
        <begin position="1"/>
        <end position="93"/>
    </location>
</feature>
<keyword id="KW-0150">Chloroplast</keyword>
<keyword id="KW-0934">Plastid</keyword>
<keyword id="KW-1185">Reference proteome</keyword>
<keyword id="KW-0687">Ribonucleoprotein</keyword>
<keyword id="KW-0689">Ribosomal protein</keyword>
<keyword id="KW-0694">RNA-binding</keyword>
<keyword id="KW-0699">rRNA-binding</keyword>
<evidence type="ECO:0000255" key="1">
    <source>
        <dbReference type="HAMAP-Rule" id="MF_00531"/>
    </source>
</evidence>
<evidence type="ECO:0000305" key="2"/>
<sequence>MTRKKTNPFVARHLLAKIEKVNMKEEKEIIVTWSRASSILPAMVGHTIAIHNGKEHIPIYITNPMVGRKLGEFVPTRHFTSYESTRKDTKSRR</sequence>
<protein>
    <recommendedName>
        <fullName evidence="1">Small ribosomal subunit protein uS19c</fullName>
    </recommendedName>
    <alternativeName>
        <fullName evidence="2">30S ribosomal protein S19, chloroplastic</fullName>
    </alternativeName>
</protein>